<evidence type="ECO:0000256" key="1">
    <source>
        <dbReference type="SAM" id="MobiDB-lite"/>
    </source>
</evidence>
<evidence type="ECO:0000269" key="2">
    <source>
    </source>
</evidence>
<sequence>MKVDLPESRLPSLYRDFRPLKDLNPDGYEANISTWRDFFLQQYISNSNRIIFTIGTRTLQELTHEVYGVPKSIDIAIDVLVNEGNLIPMELFNLGGMYTDNSRKGFWKWVRSWKESTNMYKSRKDETNFYLREDKFIIKANLEKEYQRFHELLKRSVFMEASSITDLVFTRNEFVTTESLQSFFSTYDEETKNVFLHFIENYKHIIVSKDNVIKVIAAEVEDITSRFSKGITENDLRIASVKVGIININKQITRLRKEINESNIKLRGPEFNELPKRIRIEYKQARLLSEKHLSRLLKFQNNLAQVRTQIDTSATNAVLIQTLSESNEVIKSINGYIGSTEKVEDLLDEIKEGHDRTEEVNDLLAHYNKGQDEEAEEEIERELEQLELDEKNNNKEENKNQDLHEPKESSSEDLLKRLNNLKINTNEGPVQDNENHDNEIRKIMMEEQPR</sequence>
<feature type="chain" id="PRO_0000203065" description="Uncharacterized protein YJL049W">
    <location>
        <begin position="1"/>
        <end position="450"/>
    </location>
</feature>
<feature type="region of interest" description="Disordered" evidence="1">
    <location>
        <begin position="387"/>
        <end position="439"/>
    </location>
</feature>
<feature type="compositionally biased region" description="Basic and acidic residues" evidence="1">
    <location>
        <begin position="387"/>
        <end position="416"/>
    </location>
</feature>
<accession>P47048</accession>
<accession>D6VWD4</accession>
<proteinExistence type="evidence at protein level"/>
<protein>
    <recommendedName>
        <fullName>Uncharacterized protein YJL049W</fullName>
    </recommendedName>
</protein>
<keyword id="KW-1185">Reference proteome</keyword>
<name>YJE9_YEAST</name>
<comment type="miscellaneous">
    <text evidence="2">Present with 2530 molecules/cell in log phase SD medium.</text>
</comment>
<reference key="1">
    <citation type="journal article" date="1996" name="EMBO J.">
        <title>Complete nucleotide sequence of Saccharomyces cerevisiae chromosome X.</title>
        <authorList>
            <person name="Galibert F."/>
            <person name="Alexandraki D."/>
            <person name="Baur A."/>
            <person name="Boles E."/>
            <person name="Chalwatzis N."/>
            <person name="Chuat J.-C."/>
            <person name="Coster F."/>
            <person name="Cziepluch C."/>
            <person name="de Haan M."/>
            <person name="Domdey H."/>
            <person name="Durand P."/>
            <person name="Entian K.-D."/>
            <person name="Gatius M."/>
            <person name="Goffeau A."/>
            <person name="Grivell L.A."/>
            <person name="Hennemann A."/>
            <person name="Herbert C.J."/>
            <person name="Heumann K."/>
            <person name="Hilger F."/>
            <person name="Hollenberg C.P."/>
            <person name="Huang M.-E."/>
            <person name="Jacq C."/>
            <person name="Jauniaux J.-C."/>
            <person name="Katsoulou C."/>
            <person name="Kirchrath L."/>
            <person name="Kleine K."/>
            <person name="Kordes E."/>
            <person name="Koetter P."/>
            <person name="Liebl S."/>
            <person name="Louis E.J."/>
            <person name="Manus V."/>
            <person name="Mewes H.-W."/>
            <person name="Miosga T."/>
            <person name="Obermaier B."/>
            <person name="Perea J."/>
            <person name="Pohl T.M."/>
            <person name="Portetelle D."/>
            <person name="Pujol A."/>
            <person name="Purnelle B."/>
            <person name="Ramezani Rad M."/>
            <person name="Rasmussen S.W."/>
            <person name="Rose M."/>
            <person name="Rossau R."/>
            <person name="Schaaff-Gerstenschlaeger I."/>
            <person name="Smits P.H.M."/>
            <person name="Scarcez T."/>
            <person name="Soriano N."/>
            <person name="To Van D."/>
            <person name="Tzermia M."/>
            <person name="Van Broekhoven A."/>
            <person name="Vandenbol M."/>
            <person name="Wedler H."/>
            <person name="von Wettstein D."/>
            <person name="Wambutt R."/>
            <person name="Zagulski M."/>
            <person name="Zollner A."/>
            <person name="Karpfinger-Hartl L."/>
        </authorList>
    </citation>
    <scope>NUCLEOTIDE SEQUENCE [LARGE SCALE GENOMIC DNA]</scope>
    <source>
        <strain>ATCC 204508 / S288c</strain>
    </source>
</reference>
<reference key="2">
    <citation type="journal article" date="2014" name="G3 (Bethesda)">
        <title>The reference genome sequence of Saccharomyces cerevisiae: Then and now.</title>
        <authorList>
            <person name="Engel S.R."/>
            <person name="Dietrich F.S."/>
            <person name="Fisk D.G."/>
            <person name="Binkley G."/>
            <person name="Balakrishnan R."/>
            <person name="Costanzo M.C."/>
            <person name="Dwight S.S."/>
            <person name="Hitz B.C."/>
            <person name="Karra K."/>
            <person name="Nash R.S."/>
            <person name="Weng S."/>
            <person name="Wong E.D."/>
            <person name="Lloyd P."/>
            <person name="Skrzypek M.S."/>
            <person name="Miyasato S.R."/>
            <person name="Simison M."/>
            <person name="Cherry J.M."/>
        </authorList>
    </citation>
    <scope>GENOME REANNOTATION</scope>
    <source>
        <strain>ATCC 204508 / S288c</strain>
    </source>
</reference>
<reference key="3">
    <citation type="journal article" date="2007" name="Genome Res.">
        <title>Approaching a complete repository of sequence-verified protein-encoding clones for Saccharomyces cerevisiae.</title>
        <authorList>
            <person name="Hu Y."/>
            <person name="Rolfs A."/>
            <person name="Bhullar B."/>
            <person name="Murthy T.V.S."/>
            <person name="Zhu C."/>
            <person name="Berger M.F."/>
            <person name="Camargo A.A."/>
            <person name="Kelley F."/>
            <person name="McCarron S."/>
            <person name="Jepson D."/>
            <person name="Richardson A."/>
            <person name="Raphael J."/>
            <person name="Moreira D."/>
            <person name="Taycher E."/>
            <person name="Zuo D."/>
            <person name="Mohr S."/>
            <person name="Kane M.F."/>
            <person name="Williamson J."/>
            <person name="Simpson A.J.G."/>
            <person name="Bulyk M.L."/>
            <person name="Harlow E."/>
            <person name="Marsischky G."/>
            <person name="Kolodner R.D."/>
            <person name="LaBaer J."/>
        </authorList>
    </citation>
    <scope>NUCLEOTIDE SEQUENCE [GENOMIC DNA]</scope>
    <source>
        <strain>ATCC 204508 / S288c</strain>
    </source>
</reference>
<reference key="4">
    <citation type="journal article" date="2003" name="Nature">
        <title>Global analysis of protein expression in yeast.</title>
        <authorList>
            <person name="Ghaemmaghami S."/>
            <person name="Huh W.-K."/>
            <person name="Bower K."/>
            <person name="Howson R.W."/>
            <person name="Belle A."/>
            <person name="Dephoure N."/>
            <person name="O'Shea E.K."/>
            <person name="Weissman J.S."/>
        </authorList>
    </citation>
    <scope>LEVEL OF PROTEIN EXPRESSION [LARGE SCALE ANALYSIS]</scope>
</reference>
<reference key="5">
    <citation type="journal article" date="2008" name="Mol. Cell. Proteomics">
        <title>A multidimensional chromatography technology for in-depth phosphoproteome analysis.</title>
        <authorList>
            <person name="Albuquerque C.P."/>
            <person name="Smolka M.B."/>
            <person name="Payne S.H."/>
            <person name="Bafna V."/>
            <person name="Eng J."/>
            <person name="Zhou H."/>
        </authorList>
    </citation>
    <scope>IDENTIFICATION BY MASS SPECTROMETRY [LARGE SCALE ANALYSIS]</scope>
</reference>
<reference key="6">
    <citation type="journal article" date="2012" name="Proc. Natl. Acad. Sci. U.S.A.">
        <title>N-terminal acetylome analyses and functional insights of the N-terminal acetyltransferase NatB.</title>
        <authorList>
            <person name="Van Damme P."/>
            <person name="Lasa M."/>
            <person name="Polevoda B."/>
            <person name="Gazquez C."/>
            <person name="Elosegui-Artola A."/>
            <person name="Kim D.S."/>
            <person name="De Juan-Pardo E."/>
            <person name="Demeyer K."/>
            <person name="Hole K."/>
            <person name="Larrea E."/>
            <person name="Timmerman E."/>
            <person name="Prieto J."/>
            <person name="Arnesen T."/>
            <person name="Sherman F."/>
            <person name="Gevaert K."/>
            <person name="Aldabe R."/>
        </authorList>
    </citation>
    <scope>IDENTIFICATION BY MASS SPECTROMETRY [LARGE SCALE ANALYSIS]</scope>
</reference>
<organism>
    <name type="scientific">Saccharomyces cerevisiae (strain ATCC 204508 / S288c)</name>
    <name type="common">Baker's yeast</name>
    <dbReference type="NCBI Taxonomy" id="559292"/>
    <lineage>
        <taxon>Eukaryota</taxon>
        <taxon>Fungi</taxon>
        <taxon>Dikarya</taxon>
        <taxon>Ascomycota</taxon>
        <taxon>Saccharomycotina</taxon>
        <taxon>Saccharomycetes</taxon>
        <taxon>Saccharomycetales</taxon>
        <taxon>Saccharomycetaceae</taxon>
        <taxon>Saccharomyces</taxon>
    </lineage>
</organism>
<gene>
    <name type="ordered locus">YJL049W</name>
    <name type="ORF">J1162</name>
</gene>
<dbReference type="EMBL" id="Z49324">
    <property type="protein sequence ID" value="CAA89340.1"/>
    <property type="molecule type" value="Genomic_DNA"/>
</dbReference>
<dbReference type="EMBL" id="AY692694">
    <property type="protein sequence ID" value="AAT92713.1"/>
    <property type="molecule type" value="Genomic_DNA"/>
</dbReference>
<dbReference type="EMBL" id="BK006943">
    <property type="protein sequence ID" value="DAA08750.1"/>
    <property type="molecule type" value="Genomic_DNA"/>
</dbReference>
<dbReference type="PIR" id="S56821">
    <property type="entry name" value="S56821"/>
</dbReference>
<dbReference type="SMR" id="P47048"/>
<dbReference type="BioGRID" id="33706">
    <property type="interactions" value="213"/>
</dbReference>
<dbReference type="FunCoup" id="P47048">
    <property type="interactions" value="94"/>
</dbReference>
<dbReference type="IntAct" id="P47048">
    <property type="interactions" value="5"/>
</dbReference>
<dbReference type="STRING" id="4932.YJL049W"/>
<dbReference type="iPTMnet" id="P47048"/>
<dbReference type="PaxDb" id="4932-YJL049W"/>
<dbReference type="PeptideAtlas" id="P47048"/>
<dbReference type="EnsemblFungi" id="YJL049W_mRNA">
    <property type="protein sequence ID" value="YJL049W"/>
    <property type="gene ID" value="YJL049W"/>
</dbReference>
<dbReference type="KEGG" id="sce:YJL049W"/>
<dbReference type="AGR" id="SGD:S000003585"/>
<dbReference type="SGD" id="S000003585">
    <property type="gene designation" value="YJL049W"/>
</dbReference>
<dbReference type="VEuPathDB" id="FungiDB:YJL049W"/>
<dbReference type="eggNOG" id="KOG2911">
    <property type="taxonomic scope" value="Eukaryota"/>
</dbReference>
<dbReference type="HOGENOM" id="CLU_021165_2_0_1"/>
<dbReference type="InParanoid" id="P47048"/>
<dbReference type="OMA" id="NEQMATT"/>
<dbReference type="OrthoDB" id="10250120at2759"/>
<dbReference type="BioCyc" id="YEAST:G3O-31513-MONOMER"/>
<dbReference type="Reactome" id="R-SCE-1632852">
    <property type="pathway name" value="Macroautophagy"/>
</dbReference>
<dbReference type="Reactome" id="R-SCE-917729">
    <property type="pathway name" value="Endosomal Sorting Complex Required For Transport (ESCRT)"/>
</dbReference>
<dbReference type="Reactome" id="R-SCE-9668328">
    <property type="pathway name" value="Sealing of the nuclear envelope (NE) by ESCRT-III"/>
</dbReference>
<dbReference type="BioGRID-ORCS" id="853398">
    <property type="hits" value="0 hits in 10 CRISPR screens"/>
</dbReference>
<dbReference type="PRO" id="PR:P47048"/>
<dbReference type="Proteomes" id="UP000002311">
    <property type="component" value="Chromosome X"/>
</dbReference>
<dbReference type="RNAct" id="P47048">
    <property type="molecule type" value="protein"/>
</dbReference>
<dbReference type="GO" id="GO:0009898">
    <property type="term" value="C:cytoplasmic side of plasma membrane"/>
    <property type="evidence" value="ECO:0000318"/>
    <property type="project" value="GO_Central"/>
</dbReference>
<dbReference type="GO" id="GO:0000815">
    <property type="term" value="C:ESCRT III complex"/>
    <property type="evidence" value="ECO:0000318"/>
    <property type="project" value="GO_Central"/>
</dbReference>
<dbReference type="GO" id="GO:0005771">
    <property type="term" value="C:multivesicular body"/>
    <property type="evidence" value="ECO:0000318"/>
    <property type="project" value="GO_Central"/>
</dbReference>
<dbReference type="GO" id="GO:0005637">
    <property type="term" value="C:nuclear inner membrane"/>
    <property type="evidence" value="ECO:0000314"/>
    <property type="project" value="SGD"/>
</dbReference>
<dbReference type="GO" id="GO:0070300">
    <property type="term" value="F:phosphatidic acid binding"/>
    <property type="evidence" value="ECO:0000314"/>
    <property type="project" value="SGD"/>
</dbReference>
<dbReference type="GO" id="GO:0032511">
    <property type="term" value="P:late endosome to vacuole transport via multivesicular body sorting pathway"/>
    <property type="evidence" value="ECO:0000318"/>
    <property type="project" value="GO_Central"/>
</dbReference>
<dbReference type="GO" id="GO:0051292">
    <property type="term" value="P:nuclear pore complex assembly"/>
    <property type="evidence" value="ECO:0000315"/>
    <property type="project" value="SGD"/>
</dbReference>
<dbReference type="GO" id="GO:0006900">
    <property type="term" value="P:vesicle budding from membrane"/>
    <property type="evidence" value="ECO:0000318"/>
    <property type="project" value="GO_Central"/>
</dbReference>
<dbReference type="Gene3D" id="6.10.140.1230">
    <property type="match status" value="1"/>
</dbReference>
<dbReference type="InterPro" id="IPR005024">
    <property type="entry name" value="Snf7_fam"/>
</dbReference>
<dbReference type="PANTHER" id="PTHR22761:SF96">
    <property type="entry name" value="BCDNA.GH08385"/>
    <property type="match status" value="1"/>
</dbReference>
<dbReference type="PANTHER" id="PTHR22761">
    <property type="entry name" value="CHARGED MULTIVESICULAR BODY PROTEIN"/>
    <property type="match status" value="1"/>
</dbReference>
<dbReference type="Pfam" id="PF03357">
    <property type="entry name" value="Snf7"/>
    <property type="match status" value="1"/>
</dbReference>